<reference key="1">
    <citation type="journal article" date="1987" name="Nucleic Acids Res.">
        <title>Alternative 5' exons either provide or deny an initiator methionine codon to the same alpha-tubulin coding region.</title>
        <authorList>
            <person name="Dobner P.R."/>
            <person name="Kislauskis E."/>
            <person name="Wentworth B.M."/>
            <person name="Villa-Komaroff L."/>
        </authorList>
    </citation>
    <scope>NUCLEOTIDE SEQUENCE [MRNA]</scope>
    <source>
        <tissue>Testis</tissue>
    </source>
</reference>
<evidence type="ECO:0000250" key="1">
    <source>
        <dbReference type="UniProtKB" id="P68363"/>
    </source>
</evidence>
<evidence type="ECO:0000250" key="2">
    <source>
        <dbReference type="UniProtKB" id="P68366"/>
    </source>
</evidence>
<evidence type="ECO:0000250" key="3">
    <source>
        <dbReference type="UniProtKB" id="P68368"/>
    </source>
</evidence>
<evidence type="ECO:0000250" key="4">
    <source>
        <dbReference type="UniProtKB" id="Q5XIF6"/>
    </source>
</evidence>
<evidence type="ECO:0000250" key="5">
    <source>
        <dbReference type="UniProtKB" id="Q71U36"/>
    </source>
</evidence>
<evidence type="ECO:0000250" key="6">
    <source>
        <dbReference type="UniProtKB" id="Q9BQE3"/>
    </source>
</evidence>
<evidence type="ECO:0000305" key="7"/>
<accession>P68367</accession>
<accession>P05215</accession>
<proteinExistence type="evidence at transcript level"/>
<gene>
    <name type="primary">TUBA4A</name>
    <name type="synonym">TUBA1</name>
</gene>
<dbReference type="EC" id="3.6.5.-" evidence="1"/>
<dbReference type="EMBL" id="X04757">
    <property type="protein sequence ID" value="CAA28453.1"/>
    <property type="molecule type" value="mRNA"/>
</dbReference>
<dbReference type="RefSeq" id="XP_005574425.1">
    <property type="nucleotide sequence ID" value="XM_005574368.4"/>
</dbReference>
<dbReference type="SMR" id="P68367"/>
<dbReference type="STRING" id="9541.ENSMFAP00000010975"/>
<dbReference type="Ensembl" id="ENSMFAT00000045511.2">
    <property type="protein sequence ID" value="ENSMFAP00000010975.1"/>
    <property type="gene ID" value="ENSMFAG00000007541.2"/>
</dbReference>
<dbReference type="GeneID" id="101926805"/>
<dbReference type="KEGG" id="mcf:101926805"/>
<dbReference type="CTD" id="7277"/>
<dbReference type="VEuPathDB" id="HostDB:ENSMFAG00000007541"/>
<dbReference type="eggNOG" id="KOG1376">
    <property type="taxonomic scope" value="Eukaryota"/>
</dbReference>
<dbReference type="GeneTree" id="ENSGT00950000183165"/>
<dbReference type="OMA" id="RRVTDNC"/>
<dbReference type="Proteomes" id="UP000233100">
    <property type="component" value="Chromosome 12"/>
</dbReference>
<dbReference type="Bgee" id="ENSMFAG00000007541">
    <property type="expression patterns" value="Expressed in skeletal muscle tissue and 13 other cell types or tissues"/>
</dbReference>
<dbReference type="GO" id="GO:0005737">
    <property type="term" value="C:cytoplasm"/>
    <property type="evidence" value="ECO:0007669"/>
    <property type="project" value="UniProtKB-KW"/>
</dbReference>
<dbReference type="GO" id="GO:0005874">
    <property type="term" value="C:microtubule"/>
    <property type="evidence" value="ECO:0007669"/>
    <property type="project" value="UniProtKB-KW"/>
</dbReference>
<dbReference type="GO" id="GO:0005525">
    <property type="term" value="F:GTP binding"/>
    <property type="evidence" value="ECO:0007669"/>
    <property type="project" value="UniProtKB-KW"/>
</dbReference>
<dbReference type="GO" id="GO:0016787">
    <property type="term" value="F:hydrolase activity"/>
    <property type="evidence" value="ECO:0007669"/>
    <property type="project" value="UniProtKB-KW"/>
</dbReference>
<dbReference type="GO" id="GO:0046872">
    <property type="term" value="F:metal ion binding"/>
    <property type="evidence" value="ECO:0007669"/>
    <property type="project" value="UniProtKB-KW"/>
</dbReference>
<dbReference type="GO" id="GO:0005200">
    <property type="term" value="F:structural constituent of cytoskeleton"/>
    <property type="evidence" value="ECO:0007669"/>
    <property type="project" value="InterPro"/>
</dbReference>
<dbReference type="GO" id="GO:0007017">
    <property type="term" value="P:microtubule-based process"/>
    <property type="evidence" value="ECO:0007669"/>
    <property type="project" value="InterPro"/>
</dbReference>
<dbReference type="CDD" id="cd02186">
    <property type="entry name" value="alpha_tubulin"/>
    <property type="match status" value="1"/>
</dbReference>
<dbReference type="FunFam" id="1.10.287.600:FF:000005">
    <property type="entry name" value="Tubulin alpha chain"/>
    <property type="match status" value="1"/>
</dbReference>
<dbReference type="FunFam" id="3.30.1330.20:FF:000001">
    <property type="entry name" value="Tubulin alpha chain"/>
    <property type="match status" value="1"/>
</dbReference>
<dbReference type="FunFam" id="3.40.50.1440:FF:000002">
    <property type="entry name" value="Tubulin alpha chain"/>
    <property type="match status" value="1"/>
</dbReference>
<dbReference type="Gene3D" id="1.10.287.600">
    <property type="entry name" value="Helix hairpin bin"/>
    <property type="match status" value="1"/>
</dbReference>
<dbReference type="Gene3D" id="3.30.1330.20">
    <property type="entry name" value="Tubulin/FtsZ, C-terminal domain"/>
    <property type="match status" value="1"/>
</dbReference>
<dbReference type="Gene3D" id="3.40.50.1440">
    <property type="entry name" value="Tubulin/FtsZ, GTPase domain"/>
    <property type="match status" value="1"/>
</dbReference>
<dbReference type="InterPro" id="IPR002452">
    <property type="entry name" value="Alpha_tubulin"/>
</dbReference>
<dbReference type="InterPro" id="IPR008280">
    <property type="entry name" value="Tub_FtsZ_C"/>
</dbReference>
<dbReference type="InterPro" id="IPR000217">
    <property type="entry name" value="Tubulin"/>
</dbReference>
<dbReference type="InterPro" id="IPR037103">
    <property type="entry name" value="Tubulin/FtsZ-like_C"/>
</dbReference>
<dbReference type="InterPro" id="IPR018316">
    <property type="entry name" value="Tubulin/FtsZ_2-layer-sand-dom"/>
</dbReference>
<dbReference type="InterPro" id="IPR036525">
    <property type="entry name" value="Tubulin/FtsZ_GTPase_sf"/>
</dbReference>
<dbReference type="InterPro" id="IPR023123">
    <property type="entry name" value="Tubulin_C"/>
</dbReference>
<dbReference type="InterPro" id="IPR017975">
    <property type="entry name" value="Tubulin_CS"/>
</dbReference>
<dbReference type="InterPro" id="IPR003008">
    <property type="entry name" value="Tubulin_FtsZ_GTPase"/>
</dbReference>
<dbReference type="PANTHER" id="PTHR11588">
    <property type="entry name" value="TUBULIN"/>
    <property type="match status" value="1"/>
</dbReference>
<dbReference type="Pfam" id="PF00091">
    <property type="entry name" value="Tubulin"/>
    <property type="match status" value="1"/>
</dbReference>
<dbReference type="Pfam" id="PF03953">
    <property type="entry name" value="Tubulin_C"/>
    <property type="match status" value="1"/>
</dbReference>
<dbReference type="PRINTS" id="PR01162">
    <property type="entry name" value="ALPHATUBULIN"/>
</dbReference>
<dbReference type="PRINTS" id="PR01161">
    <property type="entry name" value="TUBULIN"/>
</dbReference>
<dbReference type="SMART" id="SM00864">
    <property type="entry name" value="Tubulin"/>
    <property type="match status" value="1"/>
</dbReference>
<dbReference type="SMART" id="SM00865">
    <property type="entry name" value="Tubulin_C"/>
    <property type="match status" value="1"/>
</dbReference>
<dbReference type="SUPFAM" id="SSF55307">
    <property type="entry name" value="Tubulin C-terminal domain-like"/>
    <property type="match status" value="1"/>
</dbReference>
<dbReference type="SUPFAM" id="SSF52490">
    <property type="entry name" value="Tubulin nucleotide-binding domain-like"/>
    <property type="match status" value="1"/>
</dbReference>
<dbReference type="PROSITE" id="PS00227">
    <property type="entry name" value="TUBULIN"/>
    <property type="match status" value="1"/>
</dbReference>
<comment type="function">
    <text>Tubulin is the major constituent of microtubules, a cylinder consisting of laterally associated linear protofilaments composed of alpha- and beta-tubulin heterodimers. Microtubules grow by the addition of GTP-tubulin dimers to the microtubule end, where a stabilizing cap forms. Below the cap, tubulin dimers are in GDP-bound state, owing to GTPase activity of alpha-tubulin.</text>
</comment>
<comment type="catalytic activity">
    <reaction evidence="1">
        <text>GTP + H2O = GDP + phosphate + H(+)</text>
        <dbReference type="Rhea" id="RHEA:19669"/>
        <dbReference type="ChEBI" id="CHEBI:15377"/>
        <dbReference type="ChEBI" id="CHEBI:15378"/>
        <dbReference type="ChEBI" id="CHEBI:37565"/>
        <dbReference type="ChEBI" id="CHEBI:43474"/>
        <dbReference type="ChEBI" id="CHEBI:58189"/>
    </reaction>
    <physiologicalReaction direction="left-to-right" evidence="1">
        <dbReference type="Rhea" id="RHEA:19670"/>
    </physiologicalReaction>
</comment>
<comment type="cofactor">
    <cofactor evidence="1">
        <name>Mg(2+)</name>
        <dbReference type="ChEBI" id="CHEBI:18420"/>
    </cofactor>
</comment>
<comment type="subunit">
    <text evidence="3">Dimer of alpha and beta chains. A typical microtubule is a hollow water-filled tube with an outer diameter of 25 nm and an inner diameter of 15 nM. Alpha-beta heterodimers associate head-to-tail to form protofilaments running lengthwise along the microtubule wall with the beta-tubulin subunit facing the microtubule plus end conferring a structural polarity. Microtubules usually have 13 protofilaments but different protofilament numbers can be found in some organisms and specialized cells. Interacts with CFAP157 (By similarity).</text>
</comment>
<comment type="subcellular location">
    <subcellularLocation>
        <location>Cytoplasm</location>
        <location>Cytoskeleton</location>
    </subcellularLocation>
</comment>
<comment type="domain">
    <text evidence="1">The MREC motif may be critical for tubulin autoregulation.</text>
</comment>
<comment type="PTM">
    <text evidence="3">Some glutamate residues at the C-terminus are polyglycylated, resulting in polyglycine chains on the gamma-carboxyl group. Glycylation is mainly limited to tubulin incorporated into axonemes (cilia and flagella) whereas glutamylation is prevalent in neuronal cells, centrioles, axonemes, and the mitotic spindle. Both modifications can coexist on the same protein on adjacent residues, and lowering polyglycylation levels increases polyglutamylation, and reciprocally. Cilia and flagella glycylation is required for their stability and maintenance. Flagella glycylation controls sperm motility.</text>
</comment>
<comment type="PTM">
    <text evidence="3 5">Some glutamate residues at the C-terminus are polyglutamylated, resulting in polyglutamate chains on the gamma-carboxyl group (By similarity). Polyglutamylation plays a key role in microtubule severing by spastin (SPAST). SPAST preferentially recognizes and acts on microtubules decorated with short polyglutamate tails: severing activity by SPAST increases as the number of glutamates per tubulin rises from one to eight, but decreases beyond this glutamylation threshold (By similarity). Glutamylation is also involved in cilia motility (By similarity).</text>
</comment>
<comment type="PTM">
    <text evidence="5">Acetylation of alpha chains at Lys-40 is located inside the microtubule lumen. This modification has been correlated with increased microtubule stability, intracellular transport and ciliary assembly.</text>
</comment>
<comment type="PTM">
    <text evidence="1">Methylation of alpha chains at Lys-40 is found in mitotic microtubules and is required for normal mitosis and cytokinesis contributing to genomic stability.</text>
</comment>
<comment type="PTM">
    <text evidence="2">Although this tubulin does not encode a C-terminal tyrosine, a C-terminal tyrosine can be added post-translationally by the tubulin tyrosine ligase (TTL). It can then undergo a detyrosination cycle by the tubulin tyrosine carboxypeptidase (MATCAP1/KIAA0895L).</text>
</comment>
<comment type="miscellaneous">
    <text>This tubulin does not have a C-terminal tyrosine.</text>
</comment>
<comment type="similarity">
    <text evidence="7">Belongs to the tubulin family.</text>
</comment>
<feature type="chain" id="PRO_0000048107" description="Tubulin alpha-4A chain">
    <location>
        <begin position="1"/>
        <end position="448"/>
    </location>
</feature>
<feature type="short sequence motif" description="MREC motif" evidence="1">
    <location>
        <begin position="1"/>
        <end position="4"/>
    </location>
</feature>
<feature type="active site" evidence="1">
    <location>
        <position position="254"/>
    </location>
</feature>
<feature type="binding site" evidence="1">
    <location>
        <position position="11"/>
    </location>
    <ligand>
        <name>GTP</name>
        <dbReference type="ChEBI" id="CHEBI:37565"/>
    </ligand>
</feature>
<feature type="binding site" evidence="1">
    <location>
        <position position="71"/>
    </location>
    <ligand>
        <name>GTP</name>
        <dbReference type="ChEBI" id="CHEBI:37565"/>
    </ligand>
</feature>
<feature type="binding site" evidence="1">
    <location>
        <position position="71"/>
    </location>
    <ligand>
        <name>Mg(2+)</name>
        <dbReference type="ChEBI" id="CHEBI:18420"/>
    </ligand>
</feature>
<feature type="binding site" evidence="1">
    <location>
        <position position="140"/>
    </location>
    <ligand>
        <name>GTP</name>
        <dbReference type="ChEBI" id="CHEBI:37565"/>
    </ligand>
</feature>
<feature type="binding site" evidence="1">
    <location>
        <position position="144"/>
    </location>
    <ligand>
        <name>GTP</name>
        <dbReference type="ChEBI" id="CHEBI:37565"/>
    </ligand>
</feature>
<feature type="binding site" evidence="1">
    <location>
        <position position="145"/>
    </location>
    <ligand>
        <name>GTP</name>
        <dbReference type="ChEBI" id="CHEBI:37565"/>
    </ligand>
</feature>
<feature type="binding site" evidence="1">
    <location>
        <position position="179"/>
    </location>
    <ligand>
        <name>GTP</name>
        <dbReference type="ChEBI" id="CHEBI:37565"/>
    </ligand>
</feature>
<feature type="binding site" evidence="1">
    <location>
        <position position="206"/>
    </location>
    <ligand>
        <name>GTP</name>
        <dbReference type="ChEBI" id="CHEBI:37565"/>
    </ligand>
</feature>
<feature type="binding site" evidence="1">
    <location>
        <position position="228"/>
    </location>
    <ligand>
        <name>GTP</name>
        <dbReference type="ChEBI" id="CHEBI:37565"/>
    </ligand>
</feature>
<feature type="modified residue" description="N6-acetyllysine" evidence="2">
    <location>
        <position position="40"/>
    </location>
</feature>
<feature type="modified residue" description="Phosphoserine" evidence="2">
    <location>
        <position position="48"/>
    </location>
</feature>
<feature type="modified residue" description="3'-nitrotyrosine" evidence="3">
    <location>
        <position position="83"/>
    </location>
</feature>
<feature type="modified residue" description="Phosphotyrosine" evidence="6">
    <location>
        <position position="432"/>
    </location>
</feature>
<feature type="modified residue" description="Phosphoserine" evidence="4">
    <location>
        <position position="439"/>
    </location>
</feature>
<protein>
    <recommendedName>
        <fullName>Tubulin alpha-4A chain</fullName>
        <ecNumber evidence="1">3.6.5.-</ecNumber>
    </recommendedName>
    <alternativeName>
        <fullName>Alpha-tubulin 1</fullName>
    </alternativeName>
    <alternativeName>
        <fullName>Testis-specific alpha-tubulin</fullName>
    </alternativeName>
    <alternativeName>
        <fullName>Tubulin alpha-1 chain</fullName>
    </alternativeName>
</protein>
<keyword id="KW-0007">Acetylation</keyword>
<keyword id="KW-0963">Cytoplasm</keyword>
<keyword id="KW-0206">Cytoskeleton</keyword>
<keyword id="KW-0342">GTP-binding</keyword>
<keyword id="KW-0378">Hydrolase</keyword>
<keyword id="KW-0460">Magnesium</keyword>
<keyword id="KW-0479">Metal-binding</keyword>
<keyword id="KW-0488">Methylation</keyword>
<keyword id="KW-0493">Microtubule</keyword>
<keyword id="KW-0944">Nitration</keyword>
<keyword id="KW-0547">Nucleotide-binding</keyword>
<keyword id="KW-0597">Phosphoprotein</keyword>
<keyword id="KW-1185">Reference proteome</keyword>
<sequence>MRECISVHVGQAGVQMGNACWELYCLEHGIQPDGQMPSDKTIGGGDDSFTTFFCETGAGKHVPRAVFVDLEPTVIDEIRNGPYRQLFHPEQLITGKEDAANNYARGHYTIGKEIIDPVLDRIRKLSDQCTGLQGFLVFHSFGGGTGSGFTSLLMERLSVDYGKKSKLEFSIYPAPQVSTAVVEPYNSILTTHTTLEHSDCAFMVDNEAIYDICRRNLDIERPTYTNLNRLISQIVSSITASLRFDGALNVDLTEFQTNLVPYPRIHFPLATYAPVISAEKAYHEQLSVAEITNACFEPANQMVKCDPRHGKYMACCLLYRGDVVPKDVNAAIAAIKTKRSIQFVDWCPTGFKVGINYQPPTVVPGGDLAKVQRAVCMLSNTTAIAEAWARLDHKFDLMYAKRAFVHWYVGEGMEEGEFSEAREDMAALEKDYEEVGIDSYEDEDEGEE</sequence>
<organism>
    <name type="scientific">Macaca fascicularis</name>
    <name type="common">Crab-eating macaque</name>
    <name type="synonym">Cynomolgus monkey</name>
    <dbReference type="NCBI Taxonomy" id="9541"/>
    <lineage>
        <taxon>Eukaryota</taxon>
        <taxon>Metazoa</taxon>
        <taxon>Chordata</taxon>
        <taxon>Craniata</taxon>
        <taxon>Vertebrata</taxon>
        <taxon>Euteleostomi</taxon>
        <taxon>Mammalia</taxon>
        <taxon>Eutheria</taxon>
        <taxon>Euarchontoglires</taxon>
        <taxon>Primates</taxon>
        <taxon>Haplorrhini</taxon>
        <taxon>Catarrhini</taxon>
        <taxon>Cercopithecidae</taxon>
        <taxon>Cercopithecinae</taxon>
        <taxon>Macaca</taxon>
    </lineage>
</organism>
<name>TBA4A_MACFA</name>